<proteinExistence type="inferred from homology"/>
<gene>
    <name evidence="1" type="primary">rsmA</name>
    <name evidence="1" type="synonym">ksgA</name>
    <name type="ordered locus">cgR_1011</name>
</gene>
<sequence length="293" mass="31814">MEEPSGAQLLGPVEIRALAEKLDVTPTKKLGQNFVHDPNTVRRIVAAAELTPDDHVVEVGPGLGSLTLALVESAASVTAVEIDPRLAAELPETFQWRAPALAHKLSIVLKDALKVQQSDMEVQPTALVANLPYNVSVPVLLHMLEEFPTINKVLVMVQAEVADRLAADPGSKIYGVPSVKASFYGPVTRAGSIGKNVFWPAPKIESGLVKIVREDTAWKQDDETRKKVWPIIDAAFLQRRKTLRAALSGHYGSGQAAEEALRAADIDPTLRGEKLDVTDYVRLAGVLQQKDEK</sequence>
<accession>A4QCP0</accession>
<keyword id="KW-0963">Cytoplasm</keyword>
<keyword id="KW-0489">Methyltransferase</keyword>
<keyword id="KW-0694">RNA-binding</keyword>
<keyword id="KW-0698">rRNA processing</keyword>
<keyword id="KW-0949">S-adenosyl-L-methionine</keyword>
<keyword id="KW-0808">Transferase</keyword>
<evidence type="ECO:0000255" key="1">
    <source>
        <dbReference type="HAMAP-Rule" id="MF_00607"/>
    </source>
</evidence>
<comment type="function">
    <text evidence="1">Specifically dimethylates two adjacent adenosines (A1518 and A1519) in the loop of a conserved hairpin near the 3'-end of 16S rRNA in the 30S particle. May play a critical role in biogenesis of 30S subunits.</text>
</comment>
<comment type="catalytic activity">
    <reaction evidence="1">
        <text>adenosine(1518)/adenosine(1519) in 16S rRNA + 4 S-adenosyl-L-methionine = N(6)-dimethyladenosine(1518)/N(6)-dimethyladenosine(1519) in 16S rRNA + 4 S-adenosyl-L-homocysteine + 4 H(+)</text>
        <dbReference type="Rhea" id="RHEA:19609"/>
        <dbReference type="Rhea" id="RHEA-COMP:10232"/>
        <dbReference type="Rhea" id="RHEA-COMP:10233"/>
        <dbReference type="ChEBI" id="CHEBI:15378"/>
        <dbReference type="ChEBI" id="CHEBI:57856"/>
        <dbReference type="ChEBI" id="CHEBI:59789"/>
        <dbReference type="ChEBI" id="CHEBI:74411"/>
        <dbReference type="ChEBI" id="CHEBI:74493"/>
        <dbReference type="EC" id="2.1.1.182"/>
    </reaction>
</comment>
<comment type="subcellular location">
    <subcellularLocation>
        <location evidence="1">Cytoplasm</location>
    </subcellularLocation>
</comment>
<comment type="similarity">
    <text evidence="1">Belongs to the class I-like SAM-binding methyltransferase superfamily. rRNA adenine N(6)-methyltransferase family. RsmA subfamily.</text>
</comment>
<feature type="chain" id="PRO_1000056612" description="Ribosomal RNA small subunit methyltransferase A">
    <location>
        <begin position="1"/>
        <end position="293"/>
    </location>
</feature>
<feature type="binding site" evidence="1">
    <location>
        <position position="33"/>
    </location>
    <ligand>
        <name>S-adenosyl-L-methionine</name>
        <dbReference type="ChEBI" id="CHEBI:59789"/>
    </ligand>
</feature>
<feature type="binding site" evidence="1">
    <location>
        <position position="35"/>
    </location>
    <ligand>
        <name>S-adenosyl-L-methionine</name>
        <dbReference type="ChEBI" id="CHEBI:59789"/>
    </ligand>
</feature>
<feature type="binding site" evidence="1">
    <location>
        <position position="60"/>
    </location>
    <ligand>
        <name>S-adenosyl-L-methionine</name>
        <dbReference type="ChEBI" id="CHEBI:59789"/>
    </ligand>
</feature>
<feature type="binding site" evidence="1">
    <location>
        <position position="81"/>
    </location>
    <ligand>
        <name>S-adenosyl-L-methionine</name>
        <dbReference type="ChEBI" id="CHEBI:59789"/>
    </ligand>
</feature>
<feature type="binding site" evidence="1">
    <location>
        <position position="111"/>
    </location>
    <ligand>
        <name>S-adenosyl-L-methionine</name>
        <dbReference type="ChEBI" id="CHEBI:59789"/>
    </ligand>
</feature>
<feature type="binding site" evidence="1">
    <location>
        <position position="130"/>
    </location>
    <ligand>
        <name>S-adenosyl-L-methionine</name>
        <dbReference type="ChEBI" id="CHEBI:59789"/>
    </ligand>
</feature>
<protein>
    <recommendedName>
        <fullName evidence="1">Ribosomal RNA small subunit methyltransferase A</fullName>
        <ecNumber evidence="1">2.1.1.182</ecNumber>
    </recommendedName>
    <alternativeName>
        <fullName evidence="1">16S rRNA (adenine(1518)-N(6)/adenine(1519)-N(6))-dimethyltransferase</fullName>
    </alternativeName>
    <alternativeName>
        <fullName evidence="1">16S rRNA dimethyladenosine transferase</fullName>
    </alternativeName>
    <alternativeName>
        <fullName evidence="1">16S rRNA dimethylase</fullName>
    </alternativeName>
    <alternativeName>
        <fullName evidence="1">S-adenosylmethionine-6-N', N'-adenosyl(rRNA) dimethyltransferase</fullName>
    </alternativeName>
</protein>
<dbReference type="EC" id="2.1.1.182" evidence="1"/>
<dbReference type="EMBL" id="AP009044">
    <property type="protein sequence ID" value="BAF53987.1"/>
    <property type="molecule type" value="Genomic_DNA"/>
</dbReference>
<dbReference type="RefSeq" id="WP_011896958.1">
    <property type="nucleotide sequence ID" value="NC_009342.1"/>
</dbReference>
<dbReference type="SMR" id="A4QCP0"/>
<dbReference type="KEGG" id="cgt:cgR_1011"/>
<dbReference type="HOGENOM" id="CLU_041220_1_1_11"/>
<dbReference type="PhylomeDB" id="A4QCP0"/>
<dbReference type="Proteomes" id="UP000006698">
    <property type="component" value="Chromosome"/>
</dbReference>
<dbReference type="GO" id="GO:0005829">
    <property type="term" value="C:cytosol"/>
    <property type="evidence" value="ECO:0007669"/>
    <property type="project" value="TreeGrafter"/>
</dbReference>
<dbReference type="GO" id="GO:0052908">
    <property type="term" value="F:16S rRNA (adenine(1518)-N(6)/adenine(1519)-N(6))-dimethyltransferase activity"/>
    <property type="evidence" value="ECO:0007669"/>
    <property type="project" value="UniProtKB-EC"/>
</dbReference>
<dbReference type="GO" id="GO:0003723">
    <property type="term" value="F:RNA binding"/>
    <property type="evidence" value="ECO:0007669"/>
    <property type="project" value="UniProtKB-KW"/>
</dbReference>
<dbReference type="CDD" id="cd02440">
    <property type="entry name" value="AdoMet_MTases"/>
    <property type="match status" value="1"/>
</dbReference>
<dbReference type="FunFam" id="3.40.50.150:FF:000023">
    <property type="entry name" value="Ribosomal RNA small subunit methyltransferase A"/>
    <property type="match status" value="1"/>
</dbReference>
<dbReference type="Gene3D" id="1.10.8.100">
    <property type="entry name" value="Ribosomal RNA adenine dimethylase-like, domain 2"/>
    <property type="match status" value="1"/>
</dbReference>
<dbReference type="Gene3D" id="3.40.50.150">
    <property type="entry name" value="Vaccinia Virus protein VP39"/>
    <property type="match status" value="1"/>
</dbReference>
<dbReference type="HAMAP" id="MF_00607">
    <property type="entry name" value="16SrRNA_methyltr_A"/>
    <property type="match status" value="1"/>
</dbReference>
<dbReference type="InterPro" id="IPR001737">
    <property type="entry name" value="KsgA/Erm"/>
</dbReference>
<dbReference type="InterPro" id="IPR023165">
    <property type="entry name" value="rRNA_Ade_diMease-like_C"/>
</dbReference>
<dbReference type="InterPro" id="IPR020596">
    <property type="entry name" value="rRNA_Ade_Mease_Trfase_CS"/>
</dbReference>
<dbReference type="InterPro" id="IPR020598">
    <property type="entry name" value="rRNA_Ade_methylase_Trfase_N"/>
</dbReference>
<dbReference type="InterPro" id="IPR011530">
    <property type="entry name" value="rRNA_adenine_dimethylase"/>
</dbReference>
<dbReference type="InterPro" id="IPR029063">
    <property type="entry name" value="SAM-dependent_MTases_sf"/>
</dbReference>
<dbReference type="NCBIfam" id="TIGR00755">
    <property type="entry name" value="ksgA"/>
    <property type="match status" value="1"/>
</dbReference>
<dbReference type="PANTHER" id="PTHR11727">
    <property type="entry name" value="DIMETHYLADENOSINE TRANSFERASE"/>
    <property type="match status" value="1"/>
</dbReference>
<dbReference type="PANTHER" id="PTHR11727:SF7">
    <property type="entry name" value="DIMETHYLADENOSINE TRANSFERASE-RELATED"/>
    <property type="match status" value="1"/>
</dbReference>
<dbReference type="Pfam" id="PF00398">
    <property type="entry name" value="RrnaAD"/>
    <property type="match status" value="1"/>
</dbReference>
<dbReference type="SMART" id="SM00650">
    <property type="entry name" value="rADc"/>
    <property type="match status" value="1"/>
</dbReference>
<dbReference type="SUPFAM" id="SSF53335">
    <property type="entry name" value="S-adenosyl-L-methionine-dependent methyltransferases"/>
    <property type="match status" value="1"/>
</dbReference>
<dbReference type="PROSITE" id="PS01131">
    <property type="entry name" value="RRNA_A_DIMETH"/>
    <property type="match status" value="1"/>
</dbReference>
<dbReference type="PROSITE" id="PS51689">
    <property type="entry name" value="SAM_RNA_A_N6_MT"/>
    <property type="match status" value="1"/>
</dbReference>
<organism>
    <name type="scientific">Corynebacterium glutamicum (strain R)</name>
    <dbReference type="NCBI Taxonomy" id="340322"/>
    <lineage>
        <taxon>Bacteria</taxon>
        <taxon>Bacillati</taxon>
        <taxon>Actinomycetota</taxon>
        <taxon>Actinomycetes</taxon>
        <taxon>Mycobacteriales</taxon>
        <taxon>Corynebacteriaceae</taxon>
        <taxon>Corynebacterium</taxon>
    </lineage>
</organism>
<name>RSMA_CORGB</name>
<reference key="1">
    <citation type="journal article" date="2007" name="Microbiology">
        <title>Comparative analysis of the Corynebacterium glutamicum group and complete genome sequence of strain R.</title>
        <authorList>
            <person name="Yukawa H."/>
            <person name="Omumasaba C.A."/>
            <person name="Nonaka H."/>
            <person name="Kos P."/>
            <person name="Okai N."/>
            <person name="Suzuki N."/>
            <person name="Suda M."/>
            <person name="Tsuge Y."/>
            <person name="Watanabe J."/>
            <person name="Ikeda Y."/>
            <person name="Vertes A.A."/>
            <person name="Inui M."/>
        </authorList>
    </citation>
    <scope>NUCLEOTIDE SEQUENCE [LARGE SCALE GENOMIC DNA]</scope>
    <source>
        <strain>R</strain>
    </source>
</reference>